<evidence type="ECO:0000255" key="1"/>
<evidence type="ECO:0000305" key="2"/>
<protein>
    <recommendedName>
        <fullName>Leucine-rich repeat-containing protein 3</fullName>
    </recommendedName>
</protein>
<sequence>MGPRGRQSPSATLAPSQGSCFFILFCLRLGASCPQACQCPDHAGAVAVHCSSRGLQEIPRDIPADTVLLKLDANRISRVPNGAFQHLPQLRELDLSHNAIEAIGPAAFSGLAGGLRLLDLSHNRIRRIPKDALGKLSAKIRLSHNPLHCECALQEALWELKLDPDSVDEIACHTSAQEQFVGKPLIQVLDSGASFCSTHRKTTDVAMLVTMFGWFTMVIAYVVYYVRHNQEDARRHLEYLKSLPSAPVSKEPLSPVP</sequence>
<proteinExistence type="evidence at protein level"/>
<reference key="1">
    <citation type="journal article" date="2002" name="Genomics">
        <title>Nineteen additional unpredicted transcripts from human chromosome 21.</title>
        <authorList>
            <person name="Reymond A."/>
            <person name="Camargo A.A."/>
            <person name="Deutsch S."/>
            <person name="Stevenson B.J."/>
            <person name="Parmigiani R.B."/>
            <person name="Ucla C."/>
            <person name="Bettoni F."/>
            <person name="Rossier C."/>
            <person name="Lyle R."/>
            <person name="Guipponi M."/>
            <person name="de Souza S."/>
            <person name="Iseli C."/>
            <person name="Jongeneel C.V."/>
            <person name="Bucher P."/>
            <person name="Simpson A.J.G."/>
            <person name="Antonarakis S.E."/>
        </authorList>
    </citation>
    <scope>NUCLEOTIDE SEQUENCE [MRNA]</scope>
</reference>
<reference key="2">
    <citation type="journal article" date="2010" name="Cell">
        <title>A tissue-specific atlas of mouse protein phosphorylation and expression.</title>
        <authorList>
            <person name="Huttlin E.L."/>
            <person name="Jedrychowski M.P."/>
            <person name="Elias J.E."/>
            <person name="Goswami T."/>
            <person name="Rad R."/>
            <person name="Beausoleil S.A."/>
            <person name="Villen J."/>
            <person name="Haas W."/>
            <person name="Sowa M.E."/>
            <person name="Gygi S.P."/>
        </authorList>
    </citation>
    <scope>IDENTIFICATION BY MASS SPECTROMETRY [LARGE SCALE ANALYSIS]</scope>
    <source>
        <tissue>Liver</tissue>
    </source>
</reference>
<comment type="subcellular location">
    <subcellularLocation>
        <location evidence="2">Membrane</location>
        <topology evidence="2">Single-pass membrane protein</topology>
    </subcellularLocation>
</comment>
<comment type="similarity">
    <text evidence="2">Belongs to the LRRC3 family.</text>
</comment>
<gene>
    <name type="primary">Lrrc3</name>
</gene>
<organism>
    <name type="scientific">Mus musculus</name>
    <name type="common">Mouse</name>
    <dbReference type="NCBI Taxonomy" id="10090"/>
    <lineage>
        <taxon>Eukaryota</taxon>
        <taxon>Metazoa</taxon>
        <taxon>Chordata</taxon>
        <taxon>Craniata</taxon>
        <taxon>Vertebrata</taxon>
        <taxon>Euteleostomi</taxon>
        <taxon>Mammalia</taxon>
        <taxon>Eutheria</taxon>
        <taxon>Euarchontoglires</taxon>
        <taxon>Glires</taxon>
        <taxon>Rodentia</taxon>
        <taxon>Myomorpha</taxon>
        <taxon>Muroidea</taxon>
        <taxon>Muridae</taxon>
        <taxon>Murinae</taxon>
        <taxon>Mus</taxon>
        <taxon>Mus</taxon>
    </lineage>
</organism>
<name>LRRC3_MOUSE</name>
<accession>P59034</accession>
<feature type="signal peptide" evidence="1">
    <location>
        <begin position="1"/>
        <end position="32"/>
    </location>
</feature>
<feature type="chain" id="PRO_0000021619" description="Leucine-rich repeat-containing protein 3">
    <location>
        <begin position="33"/>
        <end position="257"/>
    </location>
</feature>
<feature type="transmembrane region" description="Helical" evidence="1">
    <location>
        <begin position="205"/>
        <end position="225"/>
    </location>
</feature>
<feature type="domain" description="LRRNT">
    <location>
        <begin position="33"/>
        <end position="64"/>
    </location>
</feature>
<feature type="repeat" description="LRR 1">
    <location>
        <begin position="65"/>
        <end position="86"/>
    </location>
</feature>
<feature type="repeat" description="LRR 2">
    <location>
        <begin position="89"/>
        <end position="110"/>
    </location>
</feature>
<feature type="repeat" description="LRR 3">
    <location>
        <begin position="114"/>
        <end position="135"/>
    </location>
</feature>
<feature type="domain" description="LRRCT">
    <location>
        <begin position="145"/>
        <end position="198"/>
    </location>
</feature>
<keyword id="KW-0433">Leucine-rich repeat</keyword>
<keyword id="KW-0472">Membrane</keyword>
<keyword id="KW-1185">Reference proteome</keyword>
<keyword id="KW-0677">Repeat</keyword>
<keyword id="KW-0732">Signal</keyword>
<keyword id="KW-0812">Transmembrane</keyword>
<keyword id="KW-1133">Transmembrane helix</keyword>
<dbReference type="EMBL" id="AY061858">
    <property type="protein sequence ID" value="AAL35742.1"/>
    <property type="molecule type" value="mRNA"/>
</dbReference>
<dbReference type="CCDS" id="CCDS23960.1"/>
<dbReference type="RefSeq" id="NP_660134.1">
    <property type="nucleotide sequence ID" value="NM_145152.4"/>
</dbReference>
<dbReference type="SMR" id="P59034"/>
<dbReference type="FunCoup" id="P59034">
    <property type="interactions" value="799"/>
</dbReference>
<dbReference type="STRING" id="10090.ENSMUSP00000059570"/>
<dbReference type="iPTMnet" id="P59034"/>
<dbReference type="PhosphoSitePlus" id="P59034"/>
<dbReference type="PaxDb" id="10090-ENSMUSP00000059570"/>
<dbReference type="ProteomicsDB" id="292368"/>
<dbReference type="Antibodypedia" id="2538">
    <property type="antibodies" value="35 antibodies from 15 providers"/>
</dbReference>
<dbReference type="DNASU" id="237387"/>
<dbReference type="Ensembl" id="ENSMUST00000057608.5">
    <property type="protein sequence ID" value="ENSMUSP00000059570.5"/>
    <property type="gene ID" value="ENSMUSG00000051652.5"/>
</dbReference>
<dbReference type="GeneID" id="237387"/>
<dbReference type="KEGG" id="mmu:237387"/>
<dbReference type="UCSC" id="uc007fwi.3">
    <property type="organism name" value="mouse"/>
</dbReference>
<dbReference type="AGR" id="MGI:2447899"/>
<dbReference type="CTD" id="81543"/>
<dbReference type="MGI" id="MGI:2447899">
    <property type="gene designation" value="Lrrc3"/>
</dbReference>
<dbReference type="VEuPathDB" id="HostDB:ENSMUSG00000051652"/>
<dbReference type="eggNOG" id="KOG4237">
    <property type="taxonomic scope" value="Eukaryota"/>
</dbReference>
<dbReference type="GeneTree" id="ENSGT00940000154360"/>
<dbReference type="HOGENOM" id="CLU_064640_0_0_1"/>
<dbReference type="InParanoid" id="P59034"/>
<dbReference type="OMA" id="QCPDHAG"/>
<dbReference type="OrthoDB" id="6343311at2759"/>
<dbReference type="PhylomeDB" id="P59034"/>
<dbReference type="TreeFam" id="TF327070"/>
<dbReference type="BioGRID-ORCS" id="237387">
    <property type="hits" value="1 hit in 75 CRISPR screens"/>
</dbReference>
<dbReference type="PRO" id="PR:P59034"/>
<dbReference type="Proteomes" id="UP000000589">
    <property type="component" value="Chromosome 10"/>
</dbReference>
<dbReference type="RNAct" id="P59034">
    <property type="molecule type" value="protein"/>
</dbReference>
<dbReference type="Bgee" id="ENSMUSG00000051652">
    <property type="expression patterns" value="Expressed in lumbar dorsal root ganglion and 152 other cell types or tissues"/>
</dbReference>
<dbReference type="ExpressionAtlas" id="P59034">
    <property type="expression patterns" value="baseline and differential"/>
</dbReference>
<dbReference type="GO" id="GO:0016020">
    <property type="term" value="C:membrane"/>
    <property type="evidence" value="ECO:0007669"/>
    <property type="project" value="UniProtKB-SubCell"/>
</dbReference>
<dbReference type="FunFam" id="3.80.10.10:FF:000069">
    <property type="entry name" value="leucine-rich repeat-containing protein 3B"/>
    <property type="match status" value="1"/>
</dbReference>
<dbReference type="Gene3D" id="3.80.10.10">
    <property type="entry name" value="Ribonuclease Inhibitor"/>
    <property type="match status" value="1"/>
</dbReference>
<dbReference type="InterPro" id="IPR001611">
    <property type="entry name" value="Leu-rich_rpt"/>
</dbReference>
<dbReference type="InterPro" id="IPR003591">
    <property type="entry name" value="Leu-rich_rpt_typical-subtyp"/>
</dbReference>
<dbReference type="InterPro" id="IPR032675">
    <property type="entry name" value="LRR_dom_sf"/>
</dbReference>
<dbReference type="InterPro" id="IPR050541">
    <property type="entry name" value="LRR_TM_domain-containing"/>
</dbReference>
<dbReference type="InterPro" id="IPR000372">
    <property type="entry name" value="LRRNT"/>
</dbReference>
<dbReference type="PANTHER" id="PTHR24369">
    <property type="entry name" value="ANTIGEN BSP, PUTATIVE-RELATED"/>
    <property type="match status" value="1"/>
</dbReference>
<dbReference type="PANTHER" id="PTHR24369:SF170">
    <property type="entry name" value="LEUCINE-RICH REPEAT-CONTAINING PROTEIN 3"/>
    <property type="match status" value="1"/>
</dbReference>
<dbReference type="Pfam" id="PF00560">
    <property type="entry name" value="LRR_1"/>
    <property type="match status" value="1"/>
</dbReference>
<dbReference type="Pfam" id="PF13855">
    <property type="entry name" value="LRR_8"/>
    <property type="match status" value="1"/>
</dbReference>
<dbReference type="Pfam" id="PF01462">
    <property type="entry name" value="LRRNT"/>
    <property type="match status" value="1"/>
</dbReference>
<dbReference type="SMART" id="SM00369">
    <property type="entry name" value="LRR_TYP"/>
    <property type="match status" value="3"/>
</dbReference>
<dbReference type="SMART" id="SM00013">
    <property type="entry name" value="LRRNT"/>
    <property type="match status" value="1"/>
</dbReference>
<dbReference type="SUPFAM" id="SSF52058">
    <property type="entry name" value="L domain-like"/>
    <property type="match status" value="1"/>
</dbReference>
<dbReference type="PROSITE" id="PS51450">
    <property type="entry name" value="LRR"/>
    <property type="match status" value="3"/>
</dbReference>